<feature type="chain" id="PRO_0000434410" description="Coilin">
    <location>
        <begin position="1"/>
        <end position="608"/>
    </location>
</feature>
<feature type="domain" description="Tudor; atypical" evidence="1">
    <location>
        <begin position="410"/>
        <end position="510"/>
    </location>
</feature>
<feature type="region of interest" description="Disordered" evidence="3">
    <location>
        <begin position="134"/>
        <end position="272"/>
    </location>
</feature>
<feature type="region of interest" description="Disordered" evidence="3">
    <location>
        <begin position="513"/>
        <end position="585"/>
    </location>
</feature>
<feature type="short sequence motif" description="Nuclear localization signal 1" evidence="2">
    <location>
        <begin position="163"/>
        <end position="170"/>
    </location>
</feature>
<feature type="short sequence motif" description="Nuclear localization signal 2" evidence="2">
    <location>
        <begin position="253"/>
        <end position="260"/>
    </location>
</feature>
<feature type="compositionally biased region" description="Acidic residues" evidence="3">
    <location>
        <begin position="141"/>
        <end position="155"/>
    </location>
</feature>
<feature type="compositionally biased region" description="Basic residues" evidence="3">
    <location>
        <begin position="161"/>
        <end position="179"/>
    </location>
</feature>
<feature type="compositionally biased region" description="Polar residues" evidence="3">
    <location>
        <begin position="211"/>
        <end position="228"/>
    </location>
</feature>
<feature type="compositionally biased region" description="Basic and acidic residues" evidence="3">
    <location>
        <begin position="235"/>
        <end position="245"/>
    </location>
</feature>
<feature type="compositionally biased region" description="Basic residues" evidence="3">
    <location>
        <begin position="256"/>
        <end position="269"/>
    </location>
</feature>
<feature type="compositionally biased region" description="Low complexity" evidence="3">
    <location>
        <begin position="558"/>
        <end position="585"/>
    </location>
</feature>
<feature type="modified residue" description="Phosphoserine" evidence="12">
    <location>
        <position position="187"/>
    </location>
</feature>
<feature type="mutagenesis site" description="In NOD-RK1; Decreased RNA-binding; when associated with A-16; A-20; A-23 and A-24. In NOD-RK1-2; Loss of RNA-binding; when associated with A-16; A-20; A-23; A-24; A-36; A-37; A-39 and A-40." evidence="5">
    <original>R</original>
    <variation>A</variation>
    <location>
        <position position="15"/>
    </location>
</feature>
<feature type="mutagenesis site" description="In NOD-RK1; Decreased RNA-binding; when associated with A-15; A-20; A-23 and A-24. In NOD-RK1-2; Loss of RNA-binding; when associated with A-15; A-20; A-23; A-24; A-36; A-37; A-39 and A-40." evidence="5">
    <original>R</original>
    <variation>A</variation>
    <location>
        <position position="16"/>
    </location>
</feature>
<feature type="mutagenesis site" description="In NOD-RK1; Decreased RNA-binding; when associated with A-15; A-16; A-23 and A-24. In NOD-RK1-2; Loss of RNA-binding; when associated with A-15; A-16; A-23; A-24; A-36; A-37; A-39 and A-40." evidence="5">
    <original>K</original>
    <variation>A</variation>
    <location>
        <position position="20"/>
    </location>
</feature>
<feature type="mutagenesis site" description="In NOD-RK1; Decreased RNA-binding; when associated with A-15; A-16; A-20 and A-24. In NOD-RK1-2; Loss of RNA-binding; when associated with A-15; A-16; A-20; A-24; A-36; A-37; A-39 and A-40." evidence="5">
    <original>K</original>
    <variation>A</variation>
    <location>
        <position position="23"/>
    </location>
</feature>
<feature type="mutagenesis site" description="In NOD-RK1; Decreased RNA-binding; when associated with A-15; A-16; A-20 and A-23. In NOD-RK1-2; Loss of RNA-binding; when associated with A-15; A-16; A-20; A-23; A-36; A-37; A-39 and A-40." evidence="5">
    <original>K</original>
    <variation>A</variation>
    <location>
        <position position="24"/>
    </location>
</feature>
<feature type="mutagenesis site" description="In NOD-RK2; No effect on RNA-binding; when associated with A-37; A39 and A-40. In NOD-RK1-2; Loss of RNA-binding; when associated with A-15; A-16; A-20; A-23; A-24; A-37; A-39 and A-40." evidence="5">
    <original>R</original>
    <variation>A</variation>
    <location>
        <position position="36"/>
    </location>
</feature>
<feature type="mutagenesis site" description="In NOD-RK2; No effect on RNA-binding; when associated with A-36; A-39 and A-40. In NOD-RK1-2; Loss of RNA-binding; when associated with A-15; A-16; A-20; A-23; A-24; A-36; A-39 and A-40." evidence="5">
    <original>K</original>
    <variation>A</variation>
    <location>
        <position position="37"/>
    </location>
</feature>
<feature type="mutagenesis site" description="In NOD-RK2; No effect on RNA-binding; when associated with A-36; A-37 and A-40. In NOD-RK1-2; Loss of RNA-binding; when associated with A-15; A-16; A-20; A-23; A-24; A-36; A-37 and A-40." evidence="5">
    <original>H</original>
    <variation>A</variation>
    <location>
        <position position="39"/>
    </location>
</feature>
<feature type="mutagenesis site" description="In NOD-RK2; No effect on RNA-binding; when associated with A-36; A-37 and A-39. In NOD-RK1-2; Loss of RNA-binding; when associated with A-15; A-16; A-20; A-23; A-24; A-36; A-37 and A-39." evidence="5">
    <original>R</original>
    <variation>A</variation>
    <location>
        <position position="40"/>
    </location>
</feature>
<feature type="mutagenesis site" description="In ncb-3; Smaller Cajal bodies." evidence="4">
    <original>E</original>
    <variation>K</variation>
    <location>
        <position position="106"/>
    </location>
</feature>
<accession>Q8RWK8</accession>
<accession>Q9SAD8</accession>
<dbReference type="EMBL" id="AC007357">
    <property type="protein sequence ID" value="AAD31056.1"/>
    <property type="status" value="ALT_SEQ"/>
    <property type="molecule type" value="Genomic_DNA"/>
</dbReference>
<dbReference type="EMBL" id="CP002684">
    <property type="protein sequence ID" value="AEE28961.1"/>
    <property type="molecule type" value="Genomic_DNA"/>
</dbReference>
<dbReference type="EMBL" id="AY093028">
    <property type="protein sequence ID" value="AAM13027.1"/>
    <property type="molecule type" value="mRNA"/>
</dbReference>
<dbReference type="EMBL" id="AY128933">
    <property type="protein sequence ID" value="AAM91333.1"/>
    <property type="molecule type" value="mRNA"/>
</dbReference>
<dbReference type="PIR" id="C86264">
    <property type="entry name" value="C86264"/>
</dbReference>
<dbReference type="RefSeq" id="NP_172762.2">
    <property type="nucleotide sequence ID" value="NM_101173.5"/>
</dbReference>
<dbReference type="FunCoup" id="Q8RWK8">
    <property type="interactions" value="1421"/>
</dbReference>
<dbReference type="IntAct" id="Q8RWK8">
    <property type="interactions" value="4"/>
</dbReference>
<dbReference type="STRING" id="3702.Q8RWK8"/>
<dbReference type="iPTMnet" id="Q8RWK8"/>
<dbReference type="PaxDb" id="3702-AT1G13030.1"/>
<dbReference type="ProteomicsDB" id="241093"/>
<dbReference type="EnsemblPlants" id="AT1G13030.1">
    <property type="protein sequence ID" value="AT1G13030.1"/>
    <property type="gene ID" value="AT1G13030"/>
</dbReference>
<dbReference type="GeneID" id="837860"/>
<dbReference type="Gramene" id="AT1G13030.1">
    <property type="protein sequence ID" value="AT1G13030.1"/>
    <property type="gene ID" value="AT1G13030"/>
</dbReference>
<dbReference type="KEGG" id="ath:AT1G13030"/>
<dbReference type="Araport" id="AT1G13030"/>
<dbReference type="TAIR" id="AT1G13030">
    <property type="gene designation" value="COILIN"/>
</dbReference>
<dbReference type="eggNOG" id="ENOG502QVBB">
    <property type="taxonomic scope" value="Eukaryota"/>
</dbReference>
<dbReference type="HOGENOM" id="CLU_018167_1_0_1"/>
<dbReference type="InParanoid" id="Q8RWK8"/>
<dbReference type="OMA" id="CEYKKQT"/>
<dbReference type="OrthoDB" id="74813at2759"/>
<dbReference type="PhylomeDB" id="Q8RWK8"/>
<dbReference type="CD-CODE" id="4299E36E">
    <property type="entry name" value="Nucleolus"/>
</dbReference>
<dbReference type="PRO" id="PR:Q8RWK8"/>
<dbReference type="Proteomes" id="UP000006548">
    <property type="component" value="Chromosome 1"/>
</dbReference>
<dbReference type="ExpressionAtlas" id="Q8RWK8">
    <property type="expression patterns" value="baseline and differential"/>
</dbReference>
<dbReference type="GO" id="GO:0015030">
    <property type="term" value="C:Cajal body"/>
    <property type="evidence" value="ECO:0007669"/>
    <property type="project" value="UniProtKB-SubCell"/>
</dbReference>
<dbReference type="GO" id="GO:0030619">
    <property type="term" value="F:U1 snRNA binding"/>
    <property type="evidence" value="ECO:0000314"/>
    <property type="project" value="TAIR"/>
</dbReference>
<dbReference type="GO" id="GO:0030620">
    <property type="term" value="F:U2 snRNA binding"/>
    <property type="evidence" value="ECO:0000314"/>
    <property type="project" value="TAIR"/>
</dbReference>
<dbReference type="GO" id="GO:0006396">
    <property type="term" value="P:RNA processing"/>
    <property type="evidence" value="ECO:0000315"/>
    <property type="project" value="TAIR"/>
</dbReference>
<dbReference type="DisProt" id="DP02248"/>
<dbReference type="InterPro" id="IPR024822">
    <property type="entry name" value="Coilin"/>
</dbReference>
<dbReference type="InterPro" id="IPR031722">
    <property type="entry name" value="Coilin_N"/>
</dbReference>
<dbReference type="InterPro" id="IPR056398">
    <property type="entry name" value="Tudor_Coilin"/>
</dbReference>
<dbReference type="PANTHER" id="PTHR15197:SF0">
    <property type="entry name" value="COILIN"/>
    <property type="match status" value="1"/>
</dbReference>
<dbReference type="PANTHER" id="PTHR15197">
    <property type="entry name" value="COILIN P80"/>
    <property type="match status" value="1"/>
</dbReference>
<dbReference type="Pfam" id="PF15862">
    <property type="entry name" value="Coilin_N"/>
    <property type="match status" value="1"/>
</dbReference>
<dbReference type="Pfam" id="PF23086">
    <property type="entry name" value="Tudor_Coilin"/>
    <property type="match status" value="1"/>
</dbReference>
<protein>
    <recommendedName>
        <fullName evidence="6">Coilin</fullName>
    </recommendedName>
    <alternativeName>
        <fullName evidence="6">Atcoilin</fullName>
    </alternativeName>
</protein>
<name>COIL_ARATH</name>
<keyword id="KW-0539">Nucleus</keyword>
<keyword id="KW-0597">Phosphoprotein</keyword>
<keyword id="KW-1185">Reference proteome</keyword>
<keyword id="KW-0694">RNA-binding</keyword>
<reference key="1">
    <citation type="journal article" date="2000" name="Nature">
        <title>Sequence and analysis of chromosome 1 of the plant Arabidopsis thaliana.</title>
        <authorList>
            <person name="Theologis A."/>
            <person name="Ecker J.R."/>
            <person name="Palm C.J."/>
            <person name="Federspiel N.A."/>
            <person name="Kaul S."/>
            <person name="White O."/>
            <person name="Alonso J."/>
            <person name="Altafi H."/>
            <person name="Araujo R."/>
            <person name="Bowman C.L."/>
            <person name="Brooks S.Y."/>
            <person name="Buehler E."/>
            <person name="Chan A."/>
            <person name="Chao Q."/>
            <person name="Chen H."/>
            <person name="Cheuk R.F."/>
            <person name="Chin C.W."/>
            <person name="Chung M.K."/>
            <person name="Conn L."/>
            <person name="Conway A.B."/>
            <person name="Conway A.R."/>
            <person name="Creasy T.H."/>
            <person name="Dewar K."/>
            <person name="Dunn P."/>
            <person name="Etgu P."/>
            <person name="Feldblyum T.V."/>
            <person name="Feng J.-D."/>
            <person name="Fong B."/>
            <person name="Fujii C.Y."/>
            <person name="Gill J.E."/>
            <person name="Goldsmith A.D."/>
            <person name="Haas B."/>
            <person name="Hansen N.F."/>
            <person name="Hughes B."/>
            <person name="Huizar L."/>
            <person name="Hunter J.L."/>
            <person name="Jenkins J."/>
            <person name="Johnson-Hopson C."/>
            <person name="Khan S."/>
            <person name="Khaykin E."/>
            <person name="Kim C.J."/>
            <person name="Koo H.L."/>
            <person name="Kremenetskaia I."/>
            <person name="Kurtz D.B."/>
            <person name="Kwan A."/>
            <person name="Lam B."/>
            <person name="Langin-Hooper S."/>
            <person name="Lee A."/>
            <person name="Lee J.M."/>
            <person name="Lenz C.A."/>
            <person name="Li J.H."/>
            <person name="Li Y.-P."/>
            <person name="Lin X."/>
            <person name="Liu S.X."/>
            <person name="Liu Z.A."/>
            <person name="Luros J.S."/>
            <person name="Maiti R."/>
            <person name="Marziali A."/>
            <person name="Militscher J."/>
            <person name="Miranda M."/>
            <person name="Nguyen M."/>
            <person name="Nierman W.C."/>
            <person name="Osborne B.I."/>
            <person name="Pai G."/>
            <person name="Peterson J."/>
            <person name="Pham P.K."/>
            <person name="Rizzo M."/>
            <person name="Rooney T."/>
            <person name="Rowley D."/>
            <person name="Sakano H."/>
            <person name="Salzberg S.L."/>
            <person name="Schwartz J.R."/>
            <person name="Shinn P."/>
            <person name="Southwick A.M."/>
            <person name="Sun H."/>
            <person name="Tallon L.J."/>
            <person name="Tambunga G."/>
            <person name="Toriumi M.J."/>
            <person name="Town C.D."/>
            <person name="Utterback T."/>
            <person name="Van Aken S."/>
            <person name="Vaysberg M."/>
            <person name="Vysotskaia V.S."/>
            <person name="Walker M."/>
            <person name="Wu D."/>
            <person name="Yu G."/>
            <person name="Fraser C.M."/>
            <person name="Venter J.C."/>
            <person name="Davis R.W."/>
        </authorList>
    </citation>
    <scope>NUCLEOTIDE SEQUENCE [LARGE SCALE GENOMIC DNA]</scope>
    <source>
        <strain>cv. Columbia</strain>
    </source>
</reference>
<reference key="2">
    <citation type="journal article" date="2017" name="Plant J.">
        <title>Araport11: a complete reannotation of the Arabidopsis thaliana reference genome.</title>
        <authorList>
            <person name="Cheng C.Y."/>
            <person name="Krishnakumar V."/>
            <person name="Chan A.P."/>
            <person name="Thibaud-Nissen F."/>
            <person name="Schobel S."/>
            <person name="Town C.D."/>
        </authorList>
    </citation>
    <scope>GENOME REANNOTATION</scope>
    <source>
        <strain>cv. Columbia</strain>
    </source>
</reference>
<reference key="3">
    <citation type="journal article" date="2003" name="Science">
        <title>Empirical analysis of transcriptional activity in the Arabidopsis genome.</title>
        <authorList>
            <person name="Yamada K."/>
            <person name="Lim J."/>
            <person name="Dale J.M."/>
            <person name="Chen H."/>
            <person name="Shinn P."/>
            <person name="Palm C.J."/>
            <person name="Southwick A.M."/>
            <person name="Wu H.C."/>
            <person name="Kim C.J."/>
            <person name="Nguyen M."/>
            <person name="Pham P.K."/>
            <person name="Cheuk R.F."/>
            <person name="Karlin-Newmann G."/>
            <person name="Liu S.X."/>
            <person name="Lam B."/>
            <person name="Sakano H."/>
            <person name="Wu T."/>
            <person name="Yu G."/>
            <person name="Miranda M."/>
            <person name="Quach H.L."/>
            <person name="Tripp M."/>
            <person name="Chang C.H."/>
            <person name="Lee J.M."/>
            <person name="Toriumi M.J."/>
            <person name="Chan M.M."/>
            <person name="Tang C.C."/>
            <person name="Onodera C.S."/>
            <person name="Deng J.M."/>
            <person name="Akiyama K."/>
            <person name="Ansari Y."/>
            <person name="Arakawa T."/>
            <person name="Banh J."/>
            <person name="Banno F."/>
            <person name="Bowser L."/>
            <person name="Brooks S.Y."/>
            <person name="Carninci P."/>
            <person name="Chao Q."/>
            <person name="Choy N."/>
            <person name="Enju A."/>
            <person name="Goldsmith A.D."/>
            <person name="Gurjal M."/>
            <person name="Hansen N.F."/>
            <person name="Hayashizaki Y."/>
            <person name="Johnson-Hopson C."/>
            <person name="Hsuan V.W."/>
            <person name="Iida K."/>
            <person name="Karnes M."/>
            <person name="Khan S."/>
            <person name="Koesema E."/>
            <person name="Ishida J."/>
            <person name="Jiang P.X."/>
            <person name="Jones T."/>
            <person name="Kawai J."/>
            <person name="Kamiya A."/>
            <person name="Meyers C."/>
            <person name="Nakajima M."/>
            <person name="Narusaka M."/>
            <person name="Seki M."/>
            <person name="Sakurai T."/>
            <person name="Satou M."/>
            <person name="Tamse R."/>
            <person name="Vaysberg M."/>
            <person name="Wallender E.K."/>
            <person name="Wong C."/>
            <person name="Yamamura Y."/>
            <person name="Yuan S."/>
            <person name="Shinozaki K."/>
            <person name="Davis R.W."/>
            <person name="Theologis A."/>
            <person name="Ecker J.R."/>
        </authorList>
    </citation>
    <scope>NUCLEOTIDE SEQUENCE [LARGE SCALE MRNA]</scope>
    <source>
        <strain>cv. Columbia</strain>
    </source>
</reference>
<reference key="4">
    <citation type="journal article" date="2006" name="Mol. Biol. Cell">
        <title>A distant coilin homologue is required for the formation of cajal bodies in Arabidopsis.</title>
        <authorList>
            <person name="Collier S."/>
            <person name="Pendle A."/>
            <person name="Boudonck K."/>
            <person name="van Rij T."/>
            <person name="Dolan L."/>
            <person name="Shaw P."/>
        </authorList>
    </citation>
    <scope>FUNCTION</scope>
    <scope>DISRUPTION PHENOTYPE</scope>
    <scope>MUTAGENESIS OF GLU-106</scope>
</reference>
<reference key="5">
    <citation type="journal article" date="2009" name="Plant Physiol.">
        <title>Large-scale Arabidopsis phosphoproteome profiling reveals novel chloroplast kinase substrates and phosphorylation networks.</title>
        <authorList>
            <person name="Reiland S."/>
            <person name="Messerli G."/>
            <person name="Baerenfaller K."/>
            <person name="Gerrits B."/>
            <person name="Endler A."/>
            <person name="Grossmann J."/>
            <person name="Gruissem W."/>
            <person name="Baginsky S."/>
        </authorList>
    </citation>
    <scope>PHOSPHORYLATION [LARGE SCALE ANALYSIS] AT SER-187</scope>
    <scope>IDENTIFICATION BY MASS SPECTROMETRY [LARGE SCALE ANALYSIS]</scope>
</reference>
<reference key="6">
    <citation type="journal article" date="2013" name="PLoS ONE">
        <title>Plant coilin: structural characteristics and RNA-binding properties.</title>
        <authorList>
            <person name="Makarov V."/>
            <person name="Rakitina D."/>
            <person name="Protopopova A."/>
            <person name="Yaminsky I."/>
            <person name="Arutiunian A."/>
            <person name="Love A.J."/>
            <person name="Taliansky M."/>
            <person name="Kalinina N."/>
        </authorList>
    </citation>
    <scope>FUNCTION</scope>
    <scope>DOMAIN</scope>
    <scope>MUTAGENESIS OF ARG-15; ARG-16; LYS-20; LYS-23; LYS-24; ARG-36; LYS-37; HIS-39 AND ARG-40</scope>
    <scope>SUBUNIT</scope>
    <scope>3D-STRUCTURE MODELING</scope>
</reference>
<sequence>MEEEKVRVRLVFEDRRILSKYQKKQGLTRSWVVLNRKCHRTISEFSDHIFHTFSLCEACPHGLSLSMEGFVLPPFESSCVLKDKDIVCVKKKKESLLEIVGEDSDENVYNAIEVEERPQIRPGEMLLANEEFQKETGGYESESEEDELEEEAEEFVPEKKASKKRKTSSKNQSTKRKKCKLDTTEESPDERENTAVVSNVVKKKKKKKSLDVQSANNDEQNNDSTKPMTKSKRSSQQEESKEHNDLCQLSAETKKTPSRSARRKKAKRQWLREKTKLEKEELLQTQLVVAPSQKPVITIDHQATKEKHCETLENQQAEEVSDGFGDEVVPVEVRPGHIRFKPLAGTDEASLDSEPLVENVLWNGNMTKKKGQKWGTEKSGFSKRYAQDFNEDATTQPAEAETLANCPIDYEQLVAYTGSVKKGDVIAYRLIELTSSWTPEVSSFRVGKISYYDPDSKMVTLMPVQEFPIEKKTEEDDDFCMQPDTSLYKEDGSLEIEFSALLDVRSVKTSSSDSAEVAKSALPEPDQSAKKPKLSANKELQTPAKENGEVSPWEELSEALSAKKAALSQANNGWNKKGSSSGGSWSYKALRGSAMGPVMNYLRSQKEI</sequence>
<comment type="function">
    <text evidence="4 5 8">Probable component of nuclear coiled bodies, also known as Cajal bodies or CBs, which are involved in the modification and assembly of nucleoplasmic snRNPs (Probable). Required for CBs formation (PubMed:16624863). Binds snRNAs and non-specific artificial RNA via the N-terminal part of the NOD domain and via the NLS2 region (212-282) of the IDD domain (PubMed:23320094). The two sites are able to function independently and provide effective RNA-binding in a non-cooperative manner (PubMed:23320094).</text>
</comment>
<comment type="subunit">
    <text evidence="5">Homooligomer. Interaction with RNA results in multimerization due to structural alteration in the NOD domain.</text>
</comment>
<comment type="subcellular location">
    <subcellularLocation>
        <location evidence="2">Nucleus</location>
    </subcellularLocation>
    <subcellularLocation>
        <location evidence="8">Nucleus</location>
        <location evidence="8">Cajal body</location>
    </subcellularLocation>
</comment>
<comment type="domain">
    <text evidence="5">Contains a N-terminal ordered domain (NOD) (1-117), central internal disordered domain (IDD) (118-349) and a C-terminal domain (CTD) (350-608) with an atypical Tudor domain containing probably two large unstructured loops.</text>
</comment>
<comment type="disruption phenotype">
    <text evidence="4">No visible phenotype, but loss of Cajal bodies.</text>
</comment>
<comment type="similarity">
    <text evidence="7">Belongs to the coilin family.</text>
</comment>
<comment type="sequence caution" evidence="7">
    <conflict type="erroneous gene model prediction">
        <sequence resource="EMBL-CDS" id="AAD31056"/>
    </conflict>
</comment>
<organism evidence="11">
    <name type="scientific">Arabidopsis thaliana</name>
    <name type="common">Mouse-ear cress</name>
    <dbReference type="NCBI Taxonomy" id="3702"/>
    <lineage>
        <taxon>Eukaryota</taxon>
        <taxon>Viridiplantae</taxon>
        <taxon>Streptophyta</taxon>
        <taxon>Embryophyta</taxon>
        <taxon>Tracheophyta</taxon>
        <taxon>Spermatophyta</taxon>
        <taxon>Magnoliopsida</taxon>
        <taxon>eudicotyledons</taxon>
        <taxon>Gunneridae</taxon>
        <taxon>Pentapetalae</taxon>
        <taxon>rosids</taxon>
        <taxon>malvids</taxon>
        <taxon>Brassicales</taxon>
        <taxon>Brassicaceae</taxon>
        <taxon>Camelineae</taxon>
        <taxon>Arabidopsis</taxon>
    </lineage>
</organism>
<gene>
    <name evidence="6" type="primary">COIL</name>
    <name evidence="9" type="ordered locus">At1g13030</name>
    <name evidence="10" type="ORF">F3F19.5</name>
</gene>
<evidence type="ECO:0000250" key="1">
    <source>
        <dbReference type="UniProtKB" id="P38432"/>
    </source>
</evidence>
<evidence type="ECO:0000255" key="2">
    <source>
        <dbReference type="PROSITE-ProRule" id="PRU00768"/>
    </source>
</evidence>
<evidence type="ECO:0000256" key="3">
    <source>
        <dbReference type="SAM" id="MobiDB-lite"/>
    </source>
</evidence>
<evidence type="ECO:0000269" key="4">
    <source>
    </source>
</evidence>
<evidence type="ECO:0000269" key="5">
    <source>
    </source>
</evidence>
<evidence type="ECO:0000303" key="6">
    <source>
    </source>
</evidence>
<evidence type="ECO:0000305" key="7"/>
<evidence type="ECO:0000305" key="8">
    <source>
    </source>
</evidence>
<evidence type="ECO:0000312" key="9">
    <source>
        <dbReference type="Araport" id="AT1G13030"/>
    </source>
</evidence>
<evidence type="ECO:0000312" key="10">
    <source>
        <dbReference type="EMBL" id="AAD31056.1"/>
    </source>
</evidence>
<evidence type="ECO:0000312" key="11">
    <source>
        <dbReference type="EMBL" id="AAM13027.1"/>
    </source>
</evidence>
<evidence type="ECO:0007744" key="12">
    <source>
    </source>
</evidence>
<proteinExistence type="evidence at protein level"/>